<sequence length="997" mass="111768">MKSYISLFFILCVIFNKNVIKCTGESQTGNTGGGQAGNTGGDQAGSTGGSPQGSTGASPQGSTGASPQGSTGASQPGSSEPSNPVSSGHSVSTVSVSQTSTSSEKQDTIQVKSALLKDYMGLKVTGPCNENFIMFLVPHIYIDVDTEDTNIELRTTLKKTNNAISFESNSGSLEKKKYVKLPSNGTTGEQGSSTGTVRGDTEPISDSSSSSSSSSSSSSSSSSSSSSSSSSSSESLPANGPDSPTVKPPRNLQNICETGKNFKLVVYIKENTLILKWKVYGETKDTTENNKVDVRKYLINEKETPFTNILIHAYKEHNGTNLIESKNYAIGSDIPEKCDTLASNCFLSGNFNIEKCFQCALLVEKENKNDVCYKYLSEDIVSKFKEIKAETEDDDEDDYTEYKLTESIDNILVKMFKTNENNDKSELIKLEEVDDSLKLELMNYCSLLKDVDTTGTLDNYGMGNEMDIFNNLKRLLIYHSEENINTLKNKFRNAAVCLKNVDDWIVNKRGLVLPELNYDLEYFNEHLYNDKNSPEDKDNKGKGVVHVDTTLEKEDTLSYDNSDNMFCNKEYCNRLKDENNCISNLQVEDQGNCDTSWIFASKYHLETIRCMKGYEPTKISALYVANCYKGEHKDRCDEGSSPMEFLQIIEDYGFLPAESNYPYNYVKVGEQCPKVEDHWMNLWDNGKILHNKNEPNSLDGKGYTAYESERFHDNMDAFVKIIKTEVMNKGSVIAYIKAENVMGYEFSGKKVQNLCGDDTADHAVNIVGYGNYVNSEGEKKSYWIVRNSWGPYWGDEGYFKVDMYGPTHCHFNFIHSVVIFNVDLPMNNKTTKKESKIYDYYLKASPEFYHNLYFKNFNVGKKNLFSEKEDNENNKKLGNNYIIFGQDTAGSGQSGKESNTALESAGTSNEVSERVHVYHILKHIKDGKIRMGMRKYIDTQDVNKKHSCTRSYAFNPENYEKCVNLCNVNWKTCEEKTSPGLCLSKLDTNNECYFCYV</sequence>
<keyword id="KW-0002">3D-structure</keyword>
<keyword id="KW-1003">Cell membrane</keyword>
<keyword id="KW-0903">Direct protein sequencing</keyword>
<keyword id="KW-1015">Disulfide bond</keyword>
<keyword id="KW-0325">Glycoprotein</keyword>
<keyword id="KW-0378">Hydrolase</keyword>
<keyword id="KW-0461">Malaria</keyword>
<keyword id="KW-0472">Membrane</keyword>
<keyword id="KW-0597">Phosphoprotein</keyword>
<keyword id="KW-0645">Protease</keyword>
<keyword id="KW-1185">Reference proteome</keyword>
<keyword id="KW-0964">Secreted</keyword>
<keyword id="KW-0720">Serine protease</keyword>
<keyword id="KW-0732">Signal</keyword>
<keyword id="KW-0865">Zymogen</keyword>
<organism>
    <name type="scientific">Plasmodium falciparum (isolate 3D7)</name>
    <dbReference type="NCBI Taxonomy" id="36329"/>
    <lineage>
        <taxon>Eukaryota</taxon>
        <taxon>Sar</taxon>
        <taxon>Alveolata</taxon>
        <taxon>Apicomplexa</taxon>
        <taxon>Aconoidasida</taxon>
        <taxon>Haemosporida</taxon>
        <taxon>Plasmodiidae</taxon>
        <taxon>Plasmodium</taxon>
        <taxon>Plasmodium (Laverania)</taxon>
    </lineage>
</organism>
<gene>
    <name evidence="15" type="primary">SERA5</name>
    <name type="ORF">PFB0340c</name>
</gene>
<proteinExistence type="evidence at protein level"/>
<protein>
    <recommendedName>
        <fullName evidence="17">Serine-repeat antigen protein 5</fullName>
        <ecNumber evidence="6 9 13">3.4.22.-</ecNumber>
    </recommendedName>
    <alternativeName>
        <fullName>111 kDa antigen</fullName>
    </alternativeName>
    <alternativeName>
        <fullName evidence="17">Serine protease SERA5</fullName>
    </alternativeName>
    <alternativeName>
        <fullName>p126</fullName>
    </alternativeName>
    <component>
        <recommendedName>
            <fullName evidence="16">p47</fullName>
        </recommendedName>
        <alternativeName>
            <fullName evidence="1">SER36</fullName>
        </alternativeName>
    </component>
    <component>
        <recommendedName>
            <fullName evidence="16">p56</fullName>
        </recommendedName>
    </component>
    <component>
        <recommendedName>
            <fullName evidence="16">p50</fullName>
        </recommendedName>
    </component>
    <component>
        <recommendedName>
            <fullName evidence="16">p18</fullName>
        </recommendedName>
    </component>
    <component>
        <recommendedName>
            <fullName evidence="16">p25n</fullName>
        </recommendedName>
    </component>
    <component>
        <recommendedName>
            <fullName evidence="16">p25c</fullName>
        </recommendedName>
    </component>
</protein>
<accession>Q9TY95</accession>
<accession>A0A143ZWK2</accession>
<dbReference type="EC" id="3.4.22.-" evidence="6 9 13"/>
<dbReference type="EMBL" id="LN999943">
    <property type="protein sequence ID" value="CZT98089.1"/>
    <property type="molecule type" value="Genomic_DNA"/>
</dbReference>
<dbReference type="PIR" id="B71617">
    <property type="entry name" value="B71617"/>
</dbReference>
<dbReference type="RefSeq" id="XP_001349586.1">
    <property type="nucleotide sequence ID" value="XM_001349550.1"/>
</dbReference>
<dbReference type="PDB" id="2WBF">
    <property type="method" value="X-ray"/>
    <property type="resolution" value="1.60 A"/>
    <property type="chains" value="X=564-828"/>
</dbReference>
<dbReference type="PDB" id="3CH2">
    <property type="method" value="X-ray"/>
    <property type="resolution" value="1.80 A"/>
    <property type="chains" value="X=564-828"/>
</dbReference>
<dbReference type="PDB" id="3CH3">
    <property type="method" value="X-ray"/>
    <property type="resolution" value="1.79 A"/>
    <property type="chains" value="X=564-828"/>
</dbReference>
<dbReference type="PDB" id="6X42">
    <property type="method" value="X-ray"/>
    <property type="resolution" value="1.20 A"/>
    <property type="chains" value="X=544-828"/>
</dbReference>
<dbReference type="PDB" id="6X44">
    <property type="method" value="X-ray"/>
    <property type="resolution" value="2.20 A"/>
    <property type="chains" value="A/B=391-828"/>
</dbReference>
<dbReference type="PDBsum" id="2WBF"/>
<dbReference type="PDBsum" id="3CH2"/>
<dbReference type="PDBsum" id="3CH3"/>
<dbReference type="PDBsum" id="6X42"/>
<dbReference type="PDBsum" id="6X44"/>
<dbReference type="BMRB" id="Q9TY95"/>
<dbReference type="SMR" id="Q9TY95"/>
<dbReference type="BioGRID" id="1207988">
    <property type="interactions" value="24"/>
</dbReference>
<dbReference type="FunCoup" id="Q9TY95">
    <property type="interactions" value="7"/>
</dbReference>
<dbReference type="IntAct" id="Q9TY95">
    <property type="interactions" value="24"/>
</dbReference>
<dbReference type="STRING" id="36329.Q9TY95"/>
<dbReference type="MEROPS" id="C01.984"/>
<dbReference type="GlyCosmos" id="Q9TY95">
    <property type="glycosylation" value="3 sites, No reported glycans"/>
</dbReference>
<dbReference type="iPTMnet" id="Q9TY95"/>
<dbReference type="SwissPalm" id="Q9TY95"/>
<dbReference type="PaxDb" id="5833-PFB0340c"/>
<dbReference type="EnsemblProtists" id="CZT98089">
    <property type="protein sequence ID" value="CZT98089"/>
    <property type="gene ID" value="PF3D7_0207600"/>
</dbReference>
<dbReference type="KEGG" id="pfa:PF3D7_0207600"/>
<dbReference type="VEuPathDB" id="PlasmoDB:PF3D7_0207600"/>
<dbReference type="HOGENOM" id="CLU_005127_0_0_1"/>
<dbReference type="InParanoid" id="Q9TY95"/>
<dbReference type="OMA" id="NTLIIKW"/>
<dbReference type="OrthoDB" id="190265at2759"/>
<dbReference type="PhylomeDB" id="Q9TY95"/>
<dbReference type="EvolutionaryTrace" id="Q9TY95"/>
<dbReference type="Proteomes" id="UP000001450">
    <property type="component" value="Chromosome 2"/>
</dbReference>
<dbReference type="GO" id="GO:0005615">
    <property type="term" value="C:extracellular space"/>
    <property type="evidence" value="ECO:0000314"/>
    <property type="project" value="UniProtKB"/>
</dbReference>
<dbReference type="GO" id="GO:0005764">
    <property type="term" value="C:lysosome"/>
    <property type="evidence" value="ECO:0000318"/>
    <property type="project" value="GO_Central"/>
</dbReference>
<dbReference type="GO" id="GO:0005886">
    <property type="term" value="C:plasma membrane"/>
    <property type="evidence" value="ECO:0007669"/>
    <property type="project" value="UniProtKB-SubCell"/>
</dbReference>
<dbReference type="GO" id="GO:0020004">
    <property type="term" value="C:symbiont-containing vacuolar space"/>
    <property type="evidence" value="ECO:0000314"/>
    <property type="project" value="UniProtKB"/>
</dbReference>
<dbReference type="GO" id="GO:0020003">
    <property type="term" value="C:symbiont-containing vacuole"/>
    <property type="evidence" value="ECO:0000314"/>
    <property type="project" value="GeneDB"/>
</dbReference>
<dbReference type="GO" id="GO:0008234">
    <property type="term" value="F:cysteine-type peptidase activity"/>
    <property type="evidence" value="ECO:0000314"/>
    <property type="project" value="GeneDB"/>
</dbReference>
<dbReference type="GO" id="GO:0019900">
    <property type="term" value="F:kinase binding"/>
    <property type="evidence" value="ECO:0000353"/>
    <property type="project" value="UniProtKB"/>
</dbReference>
<dbReference type="GO" id="GO:0008233">
    <property type="term" value="F:peptidase activity"/>
    <property type="evidence" value="ECO:0000314"/>
    <property type="project" value="UniProtKB"/>
</dbReference>
<dbReference type="GO" id="GO:0008236">
    <property type="term" value="F:serine-type peptidase activity"/>
    <property type="evidence" value="ECO:0007669"/>
    <property type="project" value="UniProtKB-KW"/>
</dbReference>
<dbReference type="GO" id="GO:0035891">
    <property type="term" value="P:exit from host cell"/>
    <property type="evidence" value="ECO:0000315"/>
    <property type="project" value="UniProtKB"/>
</dbReference>
<dbReference type="GO" id="GO:0006508">
    <property type="term" value="P:proteolysis"/>
    <property type="evidence" value="ECO:0000314"/>
    <property type="project" value="UniProtKB"/>
</dbReference>
<dbReference type="GO" id="GO:0050776">
    <property type="term" value="P:regulation of immune response"/>
    <property type="evidence" value="ECO:0000304"/>
    <property type="project" value="GeneDB"/>
</dbReference>
<dbReference type="CDD" id="cd02619">
    <property type="entry name" value="Peptidase_C1"/>
    <property type="match status" value="1"/>
</dbReference>
<dbReference type="FunFam" id="3.90.70.10:FF:000036">
    <property type="entry name" value="Serine repeat antigen 5"/>
    <property type="match status" value="1"/>
</dbReference>
<dbReference type="Gene3D" id="3.90.70.10">
    <property type="entry name" value="Cysteine proteinases"/>
    <property type="match status" value="1"/>
</dbReference>
<dbReference type="InterPro" id="IPR038765">
    <property type="entry name" value="Papain-like_cys_pep_sf"/>
</dbReference>
<dbReference type="InterPro" id="IPR025661">
    <property type="entry name" value="Pept_asp_AS"/>
</dbReference>
<dbReference type="InterPro" id="IPR025660">
    <property type="entry name" value="Pept_his_AS"/>
</dbReference>
<dbReference type="InterPro" id="IPR013128">
    <property type="entry name" value="Peptidase_C1A"/>
</dbReference>
<dbReference type="InterPro" id="IPR000668">
    <property type="entry name" value="Peptidase_C1A_C"/>
</dbReference>
<dbReference type="PANTHER" id="PTHR12411">
    <property type="entry name" value="CYSTEINE PROTEASE FAMILY C1-RELATED"/>
    <property type="match status" value="1"/>
</dbReference>
<dbReference type="Pfam" id="PF00112">
    <property type="entry name" value="Peptidase_C1"/>
    <property type="match status" value="1"/>
</dbReference>
<dbReference type="SMART" id="SM00645">
    <property type="entry name" value="Pept_C1"/>
    <property type="match status" value="1"/>
</dbReference>
<dbReference type="SUPFAM" id="SSF54001">
    <property type="entry name" value="Cysteine proteinases"/>
    <property type="match status" value="1"/>
</dbReference>
<dbReference type="PROSITE" id="PS00640">
    <property type="entry name" value="THIOL_PROTEASE_ASN"/>
    <property type="match status" value="1"/>
</dbReference>
<dbReference type="PROSITE" id="PS00639">
    <property type="entry name" value="THIOL_PROTEASE_HIS"/>
    <property type="match status" value="1"/>
</dbReference>
<feature type="signal peptide" evidence="7">
    <location>
        <begin position="1"/>
        <end position="22"/>
    </location>
</feature>
<feature type="chain" id="PRO_0000026479" description="Serine-repeat antigen protein 5">
    <location>
        <begin position="23"/>
        <end position="997"/>
    </location>
</feature>
<feature type="chain" id="PRO_0000450177" description="p47" evidence="10">
    <location>
        <begin position="23"/>
        <end position="390"/>
    </location>
</feature>
<feature type="chain" id="PRO_0000450178" description="p25n" evidence="10">
    <location>
        <begin position="23"/>
        <end position="200"/>
    </location>
</feature>
<feature type="chain" id="PRO_0000450179" description="p25c" evidence="10">
    <location>
        <begin position="201"/>
        <end position="390"/>
    </location>
</feature>
<feature type="chain" id="PRO_0000450180" description="p56" evidence="10">
    <location>
        <begin position="391"/>
        <end position="886"/>
    </location>
</feature>
<feature type="chain" id="PRO_0000450181" description="p50" evidence="10">
    <location>
        <begin position="391"/>
        <end position="842"/>
    </location>
</feature>
<feature type="propeptide" id="PRO_0000450182" description="Inhibition peptide" evidence="9 10">
    <location>
        <begin position="843"/>
        <end position="886"/>
    </location>
</feature>
<feature type="chain" id="PRO_0000450183" description="p18" evidence="10">
    <location>
        <begin position="887"/>
        <end position="997"/>
    </location>
</feature>
<feature type="region of interest" description="Disordered" evidence="5">
    <location>
        <begin position="26"/>
        <end position="107"/>
    </location>
</feature>
<feature type="region of interest" description="Disordered" evidence="5">
    <location>
        <begin position="181"/>
        <end position="252"/>
    </location>
</feature>
<feature type="region of interest" description="Interaction with PTKL" evidence="14">
    <location>
        <begin position="216"/>
        <end position="253"/>
    </location>
</feature>
<feature type="region of interest" description="Interaction with host VTN" evidence="1">
    <location>
        <begin position="373"/>
        <end position="390"/>
    </location>
</feature>
<feature type="region of interest" description="Thiol-protease-like" evidence="19">
    <location>
        <begin position="579"/>
        <end position="997"/>
    </location>
</feature>
<feature type="compositionally biased region" description="Gly residues" evidence="5">
    <location>
        <begin position="30"/>
        <end position="51"/>
    </location>
</feature>
<feature type="compositionally biased region" description="Low complexity" evidence="5">
    <location>
        <begin position="52"/>
        <end position="67"/>
    </location>
</feature>
<feature type="compositionally biased region" description="Polar residues" evidence="5">
    <location>
        <begin position="68"/>
        <end position="84"/>
    </location>
</feature>
<feature type="compositionally biased region" description="Low complexity" evidence="5">
    <location>
        <begin position="85"/>
        <end position="103"/>
    </location>
</feature>
<feature type="compositionally biased region" description="Low complexity" evidence="5">
    <location>
        <begin position="183"/>
        <end position="196"/>
    </location>
</feature>
<feature type="compositionally biased region" description="Low complexity" evidence="5">
    <location>
        <begin position="205"/>
        <end position="235"/>
    </location>
</feature>
<feature type="active site" evidence="3">
    <location>
        <position position="762"/>
    </location>
</feature>
<feature type="active site" evidence="4">
    <location>
        <position position="787"/>
    </location>
</feature>
<feature type="site" description="Cleavage; by SUB1" evidence="10">
    <location>
        <begin position="200"/>
        <end position="201"/>
    </location>
</feature>
<feature type="site" description="Cleavage; by SUB1" evidence="10">
    <location>
        <begin position="390"/>
        <end position="391"/>
    </location>
</feature>
<feature type="site" description="Ancestral active site" evidence="19 20">
    <location>
        <position position="596"/>
    </location>
</feature>
<feature type="site" description="Cleavage" evidence="10">
    <location>
        <begin position="842"/>
        <end position="843"/>
    </location>
</feature>
<feature type="site" description="Cleavage; by SUB1" evidence="10">
    <location>
        <begin position="886"/>
        <end position="887"/>
    </location>
</feature>
<feature type="modified residue" description="Phosphoserine" evidence="13">
    <location>
        <position position="183"/>
    </location>
</feature>
<feature type="modified residue" description="Phosphothreonine; by CPK1" evidence="13">
    <location>
        <position position="549"/>
    </location>
</feature>
<feature type="modified residue" description="Phosphoserine" evidence="13">
    <location>
        <position position="866"/>
    </location>
</feature>
<feature type="glycosylation site" description="N-linked (GlcNAc...) asparagine" evidence="2">
    <location>
        <position position="184"/>
    </location>
</feature>
<feature type="glycosylation site" description="N-linked (GlcNAc...) asparagine" evidence="2">
    <location>
        <position position="318"/>
    </location>
</feature>
<feature type="glycosylation site" description="N-linked (GlcNAc...) asparagine" evidence="2">
    <location>
        <position position="828"/>
    </location>
</feature>
<feature type="disulfide bond" evidence="6">
    <location>
        <begin position="445"/>
        <end position="497"/>
    </location>
</feature>
<feature type="disulfide bond" evidence="6 8 21 22 23">
    <location>
        <begin position="567"/>
        <end position="572"/>
    </location>
</feature>
<feature type="disulfide bond" evidence="8 21 22 23">
    <location>
        <begin position="581"/>
        <end position="610"/>
    </location>
</feature>
<feature type="disulfide bond" evidence="8 21 22 23">
    <location>
        <begin position="593"/>
        <end position="636"/>
    </location>
</feature>
<feature type="disulfide bond" evidence="8 21 22 23">
    <location>
        <begin position="627"/>
        <end position="672"/>
    </location>
</feature>
<feature type="disulfide bond" evidence="8 21 22 23">
    <location>
        <begin position="755"/>
        <end position="809"/>
    </location>
</feature>
<feature type="mutagenesis site" description="No viable parasite." evidence="10">
    <location>
        <begin position="590"/>
        <end position="997"/>
    </location>
</feature>
<feature type="mutagenesis site" description="Lacks protease activity. No cellular location and growth defects in host red blood cells." evidence="9 10">
    <original>S</original>
    <variation>A</variation>
    <location>
        <position position="596"/>
    </location>
</feature>
<feature type="mutagenesis site" description="Gains protease activity." evidence="10">
    <original>S</original>
    <variation>C</variation>
    <location>
        <position position="596"/>
    </location>
</feature>
<feature type="mutagenesis site" description="No viable parasite." evidence="10">
    <original>S</original>
    <variation>R</variation>
    <location>
        <position position="596"/>
    </location>
</feature>
<feature type="helix" evidence="27">
    <location>
        <begin position="394"/>
        <end position="415"/>
    </location>
</feature>
<feature type="helix" evidence="27">
    <location>
        <begin position="430"/>
        <end position="432"/>
    </location>
</feature>
<feature type="helix" evidence="27">
    <location>
        <begin position="435"/>
        <end position="451"/>
    </location>
</feature>
<feature type="helix" evidence="27">
    <location>
        <begin position="456"/>
        <end position="459"/>
    </location>
</feature>
<feature type="helix" evidence="27">
    <location>
        <begin position="465"/>
        <end position="477"/>
    </location>
</feature>
<feature type="strand" evidence="27">
    <location>
        <begin position="480"/>
        <end position="482"/>
    </location>
</feature>
<feature type="helix" evidence="27">
    <location>
        <begin position="484"/>
        <end position="490"/>
    </location>
</feature>
<feature type="helix" evidence="27">
    <location>
        <begin position="494"/>
        <end position="497"/>
    </location>
</feature>
<feature type="strand" evidence="27">
    <location>
        <begin position="498"/>
        <end position="500"/>
    </location>
</feature>
<feature type="helix" evidence="27">
    <location>
        <begin position="501"/>
        <end position="505"/>
    </location>
</feature>
<feature type="helix" evidence="27">
    <location>
        <begin position="518"/>
        <end position="521"/>
    </location>
</feature>
<feature type="turn" evidence="26">
    <location>
        <begin position="564"/>
        <end position="566"/>
    </location>
</feature>
<feature type="strand" evidence="26">
    <location>
        <begin position="567"/>
        <end position="570"/>
    </location>
</feature>
<feature type="helix" evidence="26">
    <location>
        <begin position="574"/>
        <end position="576"/>
    </location>
</feature>
<feature type="helix" evidence="26">
    <location>
        <begin position="581"/>
        <end position="584"/>
    </location>
</feature>
<feature type="strand" evidence="24">
    <location>
        <begin position="592"/>
        <end position="594"/>
    </location>
</feature>
<feature type="helix" evidence="26">
    <location>
        <begin position="596"/>
        <end position="611"/>
    </location>
</feature>
<feature type="helix" evidence="26">
    <location>
        <begin position="621"/>
        <end position="626"/>
    </location>
</feature>
<feature type="strand" evidence="26">
    <location>
        <begin position="629"/>
        <end position="631"/>
    </location>
</feature>
<feature type="turn" evidence="26">
    <location>
        <begin position="635"/>
        <end position="637"/>
    </location>
</feature>
<feature type="helix" evidence="26">
    <location>
        <begin position="642"/>
        <end position="652"/>
    </location>
</feature>
<feature type="helix" evidence="26">
    <location>
        <begin position="658"/>
        <end position="660"/>
    </location>
</feature>
<feature type="helix" evidence="26">
    <location>
        <begin position="665"/>
        <end position="667"/>
    </location>
</feature>
<feature type="turn" evidence="26">
    <location>
        <begin position="682"/>
        <end position="685"/>
    </location>
</feature>
<feature type="strand" evidence="26">
    <location>
        <begin position="694"/>
        <end position="696"/>
    </location>
</feature>
<feature type="strand" evidence="27">
    <location>
        <begin position="697"/>
        <end position="700"/>
    </location>
</feature>
<feature type="strand" evidence="26">
    <location>
        <begin position="701"/>
        <end position="707"/>
    </location>
</feature>
<feature type="helix" evidence="26">
    <location>
        <begin position="708"/>
        <end position="711"/>
    </location>
</feature>
<feature type="helix" evidence="26">
    <location>
        <begin position="715"/>
        <end position="729"/>
    </location>
</feature>
<feature type="strand" evidence="26">
    <location>
        <begin position="732"/>
        <end position="736"/>
    </location>
</feature>
<feature type="helix" evidence="26">
    <location>
        <begin position="738"/>
        <end position="741"/>
    </location>
</feature>
<feature type="helix" evidence="26">
    <location>
        <begin position="744"/>
        <end position="746"/>
    </location>
</feature>
<feature type="strand" evidence="26">
    <location>
        <begin position="747"/>
        <end position="752"/>
    </location>
</feature>
<feature type="strand" evidence="26">
    <location>
        <begin position="762"/>
        <end position="773"/>
    </location>
</feature>
<feature type="strand" evidence="26">
    <location>
        <begin position="779"/>
        <end position="786"/>
    </location>
</feature>
<feature type="strand" evidence="25">
    <location>
        <begin position="791"/>
        <end position="793"/>
    </location>
</feature>
<feature type="strand" evidence="26">
    <location>
        <begin position="798"/>
        <end position="804"/>
    </location>
</feature>
<feature type="strand" evidence="25">
    <location>
        <begin position="810"/>
        <end position="813"/>
    </location>
</feature>
<feature type="strand" evidence="26">
    <location>
        <begin position="816"/>
        <end position="820"/>
    </location>
</feature>
<name>SERA5_PLAF7</name>
<reference key="1">
    <citation type="journal article" date="1998" name="Science">
        <title>Chromosome 2 sequence of the human malaria parasite Plasmodium falciparum.</title>
        <authorList>
            <person name="Gardner M.J."/>
            <person name="Tettelin H."/>
            <person name="Carucci D.J."/>
            <person name="Cummings L.M."/>
            <person name="Aravind L."/>
            <person name="Koonin E.V."/>
            <person name="Shallom S.J."/>
            <person name="Mason T."/>
            <person name="Yu K."/>
            <person name="Fujii C."/>
            <person name="Pederson J."/>
            <person name="Shen K."/>
            <person name="Jing J."/>
            <person name="Aston C."/>
            <person name="Lai Z."/>
            <person name="Schwartz D.C."/>
            <person name="Pertea M."/>
            <person name="Salzberg S.L."/>
            <person name="Zhou L."/>
            <person name="Sutton G.G."/>
            <person name="Clayton R."/>
            <person name="White O."/>
            <person name="Smith H.O."/>
            <person name="Fraser C.M."/>
            <person name="Adams M.D."/>
            <person name="Venter J.C."/>
            <person name="Hoffman S.L."/>
        </authorList>
    </citation>
    <scope>NUCLEOTIDE SEQUENCE [LARGE SCALE GENOMIC DNA]</scope>
    <source>
        <strain>3D7</strain>
    </source>
</reference>
<reference key="2">
    <citation type="journal article" date="2002" name="Nature">
        <title>Genome sequence of the human malaria parasite Plasmodium falciparum.</title>
        <authorList>
            <person name="Gardner M.J."/>
            <person name="Hall N."/>
            <person name="Fung E."/>
            <person name="White O."/>
            <person name="Berriman M."/>
            <person name="Hyman R.W."/>
            <person name="Carlton J.M."/>
            <person name="Pain A."/>
            <person name="Nelson K.E."/>
            <person name="Bowman S."/>
            <person name="Paulsen I.T."/>
            <person name="James K.D."/>
            <person name="Eisen J.A."/>
            <person name="Rutherford K.M."/>
            <person name="Salzberg S.L."/>
            <person name="Craig A."/>
            <person name="Kyes S."/>
            <person name="Chan M.-S."/>
            <person name="Nene V."/>
            <person name="Shallom S.J."/>
            <person name="Suh B."/>
            <person name="Peterson J."/>
            <person name="Angiuoli S."/>
            <person name="Pertea M."/>
            <person name="Allen J."/>
            <person name="Selengut J."/>
            <person name="Haft D."/>
            <person name="Mather M.W."/>
            <person name="Vaidya A.B."/>
            <person name="Martin D.M.A."/>
            <person name="Fairlamb A.H."/>
            <person name="Fraunholz M.J."/>
            <person name="Roos D.S."/>
            <person name="Ralph S.A."/>
            <person name="McFadden G.I."/>
            <person name="Cummings L.M."/>
            <person name="Subramanian G.M."/>
            <person name="Mungall C."/>
            <person name="Venter J.C."/>
            <person name="Carucci D.J."/>
            <person name="Hoffman S.L."/>
            <person name="Newbold C."/>
            <person name="Davis R.W."/>
            <person name="Fraser C.M."/>
            <person name="Barrell B.G."/>
        </authorList>
    </citation>
    <scope>NUCLEOTIDE SEQUENCE [LARGE SCALE GENOMIC DNA]</scope>
    <source>
        <strain>3D7</strain>
    </source>
</reference>
<reference key="3">
    <citation type="journal article" date="2007" name="Cell">
        <title>Subcellular discharge of a serine protease mediates release of invasive malaria parasites from host erythrocytes.</title>
        <authorList>
            <person name="Yeoh S."/>
            <person name="O'Donnell R.A."/>
            <person name="Koussis K."/>
            <person name="Dluzewski A.R."/>
            <person name="Ansell K.H."/>
            <person name="Osborne S.A."/>
            <person name="Hackett F."/>
            <person name="Withers-Martinez C."/>
            <person name="Mitchell G.H."/>
            <person name="Bannister L.H."/>
            <person name="Bryans J.S."/>
            <person name="Kettleborough C.A."/>
            <person name="Blackman M.J."/>
        </authorList>
    </citation>
    <scope>PROTEIN SEQUENCE OF 23-27; 201-205; 391-394 AND 887-891</scope>
    <scope>SUBCELLULAR LOCATION</scope>
    <scope>DEVELOPMENTAL STAGE</scope>
    <scope>IDENTIFICATION BY MASS SPECTROMETRY</scope>
    <scope>PROTEOLYTIC CLEAVAGE</scope>
</reference>
<reference key="4">
    <citation type="journal article" date="2015" name="Mol. Microbiol.">
        <title>Plasmodium falciparum SERA5 plays a non-enzymatic role in the malarial asexual blood-stage lifecycle.</title>
        <authorList>
            <person name="Stallmach R."/>
            <person name="Kavishwar M."/>
            <person name="Withers-Martinez C."/>
            <person name="Hackett F."/>
            <person name="Collins C.R."/>
            <person name="Howell S.A."/>
            <person name="Yeoh S."/>
            <person name="Knuepfer E."/>
            <person name="Atid A.J."/>
            <person name="Holder A.A."/>
            <person name="Blackman M.J."/>
        </authorList>
    </citation>
    <scope>PROTEIN SEQUENCE OF 391-395</scope>
    <scope>FUNCTION</scope>
    <scope>LACK OF CATALYTIC ACTIVITY</scope>
    <scope>SUBUNIT</scope>
    <scope>SUBCELLULAR LOCATION</scope>
    <scope>DEVELOPMENTAL STAGE</scope>
    <scope>PROTEOLYTIC CLEAVAGE</scope>
    <scope>MASS SPECTROMETRY</scope>
    <scope>MUTAGENESIS OF 560-GLU--VAL-997 AND SER-596</scope>
</reference>
<reference key="5">
    <citation type="journal article" date="2003" name="J. Biol. Chem.">
        <title>Enzymic, phylogenetic, and structural characterization of the unusual papain-like protease domain of Plasmodium falciparum SERA5.</title>
        <authorList>
            <person name="Hodder A.N."/>
            <person name="Drew D.R."/>
            <person name="Epa V.C."/>
            <person name="Delorenzi M."/>
            <person name="Bourgon R."/>
            <person name="Miller S.K."/>
            <person name="Moritz R.L."/>
            <person name="Frecklington D.F."/>
            <person name="Simpson R.J."/>
            <person name="Speed T.P."/>
            <person name="Pike R.N."/>
            <person name="Crabb B.S."/>
        </authorList>
    </citation>
    <scope>FUNCTION</scope>
    <scope>CATALYTIC ACTIVITY</scope>
    <scope>SUBUNIT</scope>
    <scope>DISULFIDE BONDS</scope>
</reference>
<reference key="6">
    <citation type="journal article" date="2014" name="Biochim. Biophys. Acta">
        <title>Synthetic peptides derived from the C-terminal 6kDa region of Plasmodium falciparum SERA5 inhibit the enzyme activity and malaria parasite development.</title>
        <authorList>
            <person name="Kanodia S."/>
            <person name="Kumar G."/>
            <person name="Rizzi L."/>
            <person name="Pedretti A."/>
            <person name="Hodder A.N."/>
            <person name="Romeo S."/>
            <person name="Malhotra P."/>
        </authorList>
    </citation>
    <scope>FUNCTION</scope>
    <scope>CATALYTIC ACTIVITY</scope>
    <scope>DEVELOPMENTAL STAGE</scope>
    <scope>PROTEOLYTIC CLEAVAGE</scope>
    <scope>MUTAGENESIS OF SER-596</scope>
</reference>
<reference key="7">
    <citation type="journal article" date="2017" name="PLoS Pathog.">
        <title>The Plasmodium falciparum pseudoprotease SERA5 regulates the kinetics and efficiency of malaria parasite egress from host erythrocytes.</title>
        <authorList>
            <person name="Collins C.R."/>
            <person name="Hackett F."/>
            <person name="Atid J."/>
            <person name="Tan M.S.Y."/>
            <person name="Blackman M.J."/>
        </authorList>
    </citation>
    <scope>FUNCTION</scope>
    <scope>SUBCELLULAR LOCATION</scope>
    <scope>DEVELOPMENTAL STAGE</scope>
    <scope>PROTEOLYTIC CLEAVAGE</scope>
    <scope>DISRUPTION PHENOTYPE</scope>
</reference>
<reference key="8">
    <citation type="journal article" date="2018" name="J. Biol. Chem.">
        <title>Calcium-dependent phosphorylation of Plasmodium falciparum serine repeat antigen 5 triggers merozoite egress.</title>
        <authorList>
            <person name="Iyer G.R."/>
            <person name="Singh S."/>
            <person name="Kaur I."/>
            <person name="Agarwal S."/>
            <person name="Siddiqui M.A."/>
            <person name="Bansal A."/>
            <person name="Kumar G."/>
            <person name="Saini E."/>
            <person name="Paul G."/>
            <person name="Mohmmed A."/>
            <person name="Chitnis C.E."/>
            <person name="Malhotra P."/>
        </authorList>
    </citation>
    <scope>FUNCTION</scope>
    <scope>CATALYTIC ACTIVITY</scope>
    <scope>INTERACTION WITH CPK1</scope>
    <scope>SUBCELLULAR LOCATION</scope>
    <scope>DEVELOPMENTAL STAGE</scope>
    <scope>IDENTIFICATION BY MASS SPECTROMETRY</scope>
    <scope>PHOSPHORYLATION AT SER-183; THR-549 AND SER-866</scope>
</reference>
<reference key="9">
    <citation type="journal article" date="2018" name="Sci. Rep.">
        <title>Molecular Camouflage of Plasmodium falciparum Merozoites by Binding of Host Vitronectin to P47 Fragment of SERA5.</title>
        <authorList>
            <person name="Tougan T."/>
            <person name="Edula J.R."/>
            <person name="Takashima E."/>
            <person name="Morita M."/>
            <person name="Shinohara M."/>
            <person name="Shinohara A."/>
            <person name="Tsuboi T."/>
            <person name="Horii T."/>
        </authorList>
    </citation>
    <scope>SUBCELLULAR LOCATION</scope>
    <scope>DEVELOPMENTAL STAGE</scope>
</reference>
<reference key="10">
    <citation type="journal article" date="2019" name="Sci. Rep.">
        <title>Plasmodium pseudo-Tyrosine Kinase-like binds PP1 and SERA5 and is exported to host erythrocytes.</title>
        <authorList>
            <person name="Gnangnon B."/>
            <person name="Freville A."/>
            <person name="Cailliau K."/>
            <person name="Leroy C."/>
            <person name="De Witte C."/>
            <person name="Tulasne D."/>
            <person name="Martoriarti A."/>
            <person name="Jung V."/>
            <person name="Guerrera I.C."/>
            <person name="Marion S."/>
            <person name="Khalife J."/>
            <person name="Pierrot C."/>
        </authorList>
    </citation>
    <scope>INTERACTION WITH PTKL</scope>
</reference>
<reference evidence="21 22 23" key="11">
    <citation type="journal article" date="2009" name="J. Mol. Biol.">
        <title>Structural insights into the protease-like antigen Plasmodium falciparum SERA5 and its noncanonical active-site serine.</title>
        <authorList>
            <person name="Hodder A.N."/>
            <person name="Malby R.L."/>
            <person name="Clarke O.B."/>
            <person name="Fairlie W.D."/>
            <person name="Colman P.M."/>
            <person name="Crabb B.S."/>
            <person name="Smith B.J."/>
        </authorList>
    </citation>
    <scope>X-RAY CRYSTALLOGRAPHY (1.79 ANGSTROMS) OF 564-828</scope>
    <scope>DISULFIDE BONDS</scope>
</reference>
<evidence type="ECO:0000250" key="1">
    <source>
        <dbReference type="UniProtKB" id="P69193"/>
    </source>
</evidence>
<evidence type="ECO:0000255" key="2"/>
<evidence type="ECO:0000255" key="3">
    <source>
        <dbReference type="PROSITE-ProRule" id="PRU10089"/>
    </source>
</evidence>
<evidence type="ECO:0000255" key="4">
    <source>
        <dbReference type="PROSITE-ProRule" id="PRU10090"/>
    </source>
</evidence>
<evidence type="ECO:0000256" key="5">
    <source>
        <dbReference type="SAM" id="MobiDB-lite"/>
    </source>
</evidence>
<evidence type="ECO:0000269" key="6">
    <source>
    </source>
</evidence>
<evidence type="ECO:0000269" key="7">
    <source>
    </source>
</evidence>
<evidence type="ECO:0000269" key="8">
    <source>
    </source>
</evidence>
<evidence type="ECO:0000269" key="9">
    <source>
    </source>
</evidence>
<evidence type="ECO:0000269" key="10">
    <source>
    </source>
</evidence>
<evidence type="ECO:0000269" key="11">
    <source>
    </source>
</evidence>
<evidence type="ECO:0000269" key="12">
    <source>
    </source>
</evidence>
<evidence type="ECO:0000269" key="13">
    <source>
    </source>
</evidence>
<evidence type="ECO:0000269" key="14">
    <source>
    </source>
</evidence>
<evidence type="ECO:0000303" key="15">
    <source>
    </source>
</evidence>
<evidence type="ECO:0000303" key="16">
    <source>
    </source>
</evidence>
<evidence type="ECO:0000305" key="17"/>
<evidence type="ECO:0000305" key="18">
    <source>
    </source>
</evidence>
<evidence type="ECO:0000305" key="19">
    <source>
    </source>
</evidence>
<evidence type="ECO:0000305" key="20">
    <source>
    </source>
</evidence>
<evidence type="ECO:0007744" key="21">
    <source>
        <dbReference type="PDB" id="2WBF"/>
    </source>
</evidence>
<evidence type="ECO:0007744" key="22">
    <source>
        <dbReference type="PDB" id="3CH2"/>
    </source>
</evidence>
<evidence type="ECO:0007744" key="23">
    <source>
        <dbReference type="PDB" id="3CH3"/>
    </source>
</evidence>
<evidence type="ECO:0007829" key="24">
    <source>
        <dbReference type="PDB" id="3CH2"/>
    </source>
</evidence>
<evidence type="ECO:0007829" key="25">
    <source>
        <dbReference type="PDB" id="3CH3"/>
    </source>
</evidence>
<evidence type="ECO:0007829" key="26">
    <source>
        <dbReference type="PDB" id="6X42"/>
    </source>
</evidence>
<evidence type="ECO:0007829" key="27">
    <source>
        <dbReference type="PDB" id="6X44"/>
    </source>
</evidence>
<comment type="function">
    <text evidence="10 11">Plays an essential role during the asexual blood stage development by controlling the kinetics of merozoite egress from host erythrocytes (PubMed:25599609, PubMed:28683142). Specifically, prevents premature rupture of the parasitophorous vacuole and host erythrocyte membranes (PubMed:28683142).</text>
</comment>
<comment type="function">
    <molecule>p47</molecule>
    <text evidence="1">May prevent merozoite phagocytosis by host monocytes via interaction with host VTN at the merozoite surface (By similarity). Plays a role in parasite growth (By similarity).</text>
</comment>
<comment type="function">
    <molecule>p50</molecule>
    <text evidence="6 9 10 13">Protease activity is controversial (PubMed:25599609). Has been shown in a number of studies to have protease activity towards a synthetic peptide in vitro (PubMed:13679369, PubMed:24769454, PubMed:29716996). Has also been shown to lack protease activity towards a synthetic peptide in vitro (PubMed:25599609).</text>
</comment>
<comment type="subunit">
    <text evidence="14">May interact (via C-terminus) with PTKL (via SAM domain).</text>
</comment>
<comment type="subunit">
    <molecule>p47</molecule>
    <text evidence="1">Interacts (via C-terminus) with human VTN (via hemopexin repeat 2); may form heterotetramers of two VTN and SERA5 P47 heterodimers; the interaction may protect merozoites from phagocytosis by host monocytes; VTN glycosylation appears to be dispensable for the interaction.</text>
</comment>
<comment type="subunit">
    <molecule>p50</molecule>
    <text evidence="6 10 13">Monomer (PubMed:13679369, PubMed:25599609). Interacts with kinase CPK1/CDPK1 at the schizont stage (PubMed:29716996).</text>
</comment>
<comment type="interaction">
    <interactant intactId="EBI-826913">
        <id>Q9TY95</id>
    </interactant>
    <interactant intactId="EBI-1568896">
        <id>Q8I0V0</id>
        <label>SUB1</label>
    </interactant>
    <organismsDiffer>false</organismsDiffer>
    <experiments>3</experiments>
</comment>
<comment type="subcellular location">
    <molecule>Serine-repeat antigen protein 5</molecule>
    <subcellularLocation>
        <location evidence="10 11 13 18">Parasitophorous vacuole</location>
    </subcellularLocation>
    <text evidence="18">Secreted in large amount into the parasitophorous vacuole.</text>
</comment>
<comment type="subcellular location">
    <molecule>p18</molecule>
    <subcellularLocation>
        <location evidence="1">Secreted</location>
    </subcellularLocation>
    <text evidence="1">Secreted during merozoite egress from erythrocytes.</text>
</comment>
<comment type="subcellular location">
    <molecule>p25n</molecule>
    <subcellularLocation>
        <location>Secreted</location>
    </subcellularLocation>
    <text evidence="1">Secreted during merozoite egress from erythrocytes.</text>
</comment>
<comment type="subcellular location">
    <molecule>p25c</molecule>
    <subcellularLocation>
        <location evidence="1">Secreted</location>
    </subcellularLocation>
    <text evidence="1">Secreted during merozoite egress from erythrocytes.</text>
</comment>
<comment type="subcellular location">
    <molecule>p47</molecule>
    <subcellularLocation>
        <location evidence="1">Secreted</location>
    </subcellularLocation>
    <subcellularLocation>
        <location evidence="12">Cell membrane</location>
        <topology evidence="12">Peripheral membrane protein</topology>
        <orientation evidence="1">Extracellular side</orientation>
    </subcellularLocation>
    <text evidence="1 12">Secreted during merozoite egress from erythrocytes (By similarity). Colocalizes at the merozoite surface with human VTN (PubMed:29567995).</text>
</comment>
<comment type="subcellular location">
    <molecule>p50</molecule>
    <subcellularLocation>
        <location evidence="7 10">Secreted</location>
    </subcellularLocation>
    <text evidence="10">Secreted during egress from host erythrocytes.</text>
</comment>
<comment type="subcellular location">
    <molecule>p56</molecule>
    <subcellularLocation>
        <location evidence="7">Secreted</location>
    </subcellularLocation>
    <text evidence="10">Secreted during egress from host erythrocytes.</text>
</comment>
<comment type="developmental stage">
    <molecule>Serine-repeat antigen protein 5</molecule>
    <text evidence="7 9 10 11 12 13">Expressed during parasite asexual blood stages, specifically in late trophozoite and schizont stages (at protein level).</text>
</comment>
<comment type="developmental stage">
    <molecule>p50</molecule>
    <text evidence="10 13">Produced during parasite asexual blood stages, specifically at the merozoite stage just prior to egress (at protein level).</text>
</comment>
<comment type="PTM">
    <molecule>p50</molecule>
    <text evidence="13">Phosphorylation by CPK1/CDPK1 increases SERA5 protease activity towards a synthetic peptide in vitro.</text>
</comment>
<comment type="PTM">
    <text evidence="7 9 10 11">Just prior to merozoite egress from host erythrocytes, proteolytically cleaved into multiple fragments (PubMed:18083098, PubMed:24769454, PubMed:25599609). Cleaved by SUB1 into p47 and p73, p73 is further cleaved by SUB1 into p56 and p18 and p56 is further processed into p50 by an unidentified protease (PubMed:18083098, PubMed:25599609). p47 remains covalently associated with p18 via disulfide bond (PubMed:25599609). p47 can be processed into p25n and p25c by SUB1 (PubMed:18083098, PubMed:25599609). p25c and p25n remain associated with p18 (PubMed:25599609). Proteolytic processing is essential for merozoite egress from host erythrocytes (PubMed:28683142). The cleavage of the propeptide to produce p50 is necessary for protease activity and to promote merozoite egress (PubMed:24769454).</text>
</comment>
<comment type="mass spectrometry" mass="52540.17" method="Electrospray" evidence="10">
    <molecule>p50</molecule>
</comment>
<comment type="disruption phenotype">
    <text evidence="11">Conditional knockout at the merozoite stage, does not cause any defect in schizont morphology, merozoite number and maturation initially. During the subsequent invasive cycle in host erythrocytes, merozoite replication is severely impaired due to a premature rupture of the parasitophorous vacuole and erythrocyte membranes resulting in an inefficient dispersal of released merozoites.</text>
</comment>
<comment type="similarity">
    <text evidence="3 4">Belongs to the peptidase C1 family.</text>
</comment>
<comment type="caution">
    <text evidence="6 9 13 19 20">In contrast to other serine-repeat antigen proteins (SERA) of the peptidase C1 family, contains a serine residue at the position of the canonical catalytic cysteine and has been shown to lack protease activity. However, other studies show that it has protease activity towards synthetic peptides in vitro (PubMed:13679369, PubMed:24769454, PubMed:29716996).</text>
</comment>